<sequence length="364" mass="41158">MALSRLMIRDFRNISVADLSLAADFNFLVGANGSGKTSVLEAIYTLGHGRAFRSLQSGRVIRHEQPEFVLHGRIEAGNVDARATSVGLSRNRLGDSTVRIDGSDGHKVAELAQLLPMQLITPEGFTLLNGGPKYRRAFMDWGCFHNEPAFFTAWSNLRRLLKQRNAALRQVSRYQQLRVWDQELIPLANRISEWRADYSAAIAADITATCAQFLPEFRLDFSFQRGWDKESDFGELLERQFERDRALTYTASGPHKADFRIRAEGVPVEDILSRGQLKLLMCALRLAQGEFLTHRNGRRCLYLIDDFASELDTGRRRLLAERLKATHAQVFVSAVSADQIRDIPDEKGKMFKVEQGKISLQSEV</sequence>
<dbReference type="EMBL" id="AP008232">
    <property type="protein sequence ID" value="BAE73278.1"/>
    <property type="molecule type" value="Genomic_DNA"/>
</dbReference>
<dbReference type="RefSeq" id="WP_011409868.1">
    <property type="nucleotide sequence ID" value="NC_007712.1"/>
</dbReference>
<dbReference type="SMR" id="Q2NX47"/>
<dbReference type="STRING" id="343509.SG0003"/>
<dbReference type="KEGG" id="sgl:SG0003"/>
<dbReference type="eggNOG" id="COG1195">
    <property type="taxonomic scope" value="Bacteria"/>
</dbReference>
<dbReference type="HOGENOM" id="CLU_040267_0_0_6"/>
<dbReference type="OrthoDB" id="9803889at2"/>
<dbReference type="Proteomes" id="UP000001932">
    <property type="component" value="Chromosome"/>
</dbReference>
<dbReference type="GO" id="GO:0005737">
    <property type="term" value="C:cytoplasm"/>
    <property type="evidence" value="ECO:0007669"/>
    <property type="project" value="UniProtKB-SubCell"/>
</dbReference>
<dbReference type="GO" id="GO:0005524">
    <property type="term" value="F:ATP binding"/>
    <property type="evidence" value="ECO:0007669"/>
    <property type="project" value="UniProtKB-UniRule"/>
</dbReference>
<dbReference type="GO" id="GO:0003697">
    <property type="term" value="F:single-stranded DNA binding"/>
    <property type="evidence" value="ECO:0007669"/>
    <property type="project" value="UniProtKB-UniRule"/>
</dbReference>
<dbReference type="GO" id="GO:0006260">
    <property type="term" value="P:DNA replication"/>
    <property type="evidence" value="ECO:0007669"/>
    <property type="project" value="UniProtKB-UniRule"/>
</dbReference>
<dbReference type="GO" id="GO:0000731">
    <property type="term" value="P:DNA synthesis involved in DNA repair"/>
    <property type="evidence" value="ECO:0007669"/>
    <property type="project" value="TreeGrafter"/>
</dbReference>
<dbReference type="GO" id="GO:0006302">
    <property type="term" value="P:double-strand break repair"/>
    <property type="evidence" value="ECO:0007669"/>
    <property type="project" value="TreeGrafter"/>
</dbReference>
<dbReference type="GO" id="GO:0009432">
    <property type="term" value="P:SOS response"/>
    <property type="evidence" value="ECO:0007669"/>
    <property type="project" value="UniProtKB-UniRule"/>
</dbReference>
<dbReference type="FunFam" id="1.20.1050.90:FF:000001">
    <property type="entry name" value="DNA replication and repair protein RecF"/>
    <property type="match status" value="1"/>
</dbReference>
<dbReference type="Gene3D" id="3.40.50.300">
    <property type="entry name" value="P-loop containing nucleotide triphosphate hydrolases"/>
    <property type="match status" value="1"/>
</dbReference>
<dbReference type="Gene3D" id="1.20.1050.90">
    <property type="entry name" value="RecF/RecN/SMC, N-terminal domain"/>
    <property type="match status" value="1"/>
</dbReference>
<dbReference type="HAMAP" id="MF_00365">
    <property type="entry name" value="RecF"/>
    <property type="match status" value="1"/>
</dbReference>
<dbReference type="InterPro" id="IPR001238">
    <property type="entry name" value="DNA-binding_RecF"/>
</dbReference>
<dbReference type="InterPro" id="IPR018078">
    <property type="entry name" value="DNA-binding_RecF_CS"/>
</dbReference>
<dbReference type="InterPro" id="IPR027417">
    <property type="entry name" value="P-loop_NTPase"/>
</dbReference>
<dbReference type="InterPro" id="IPR003395">
    <property type="entry name" value="RecF/RecN/SMC_N"/>
</dbReference>
<dbReference type="InterPro" id="IPR042174">
    <property type="entry name" value="RecF_2"/>
</dbReference>
<dbReference type="NCBIfam" id="TIGR00611">
    <property type="entry name" value="recf"/>
    <property type="match status" value="1"/>
</dbReference>
<dbReference type="PANTHER" id="PTHR32182">
    <property type="entry name" value="DNA REPLICATION AND REPAIR PROTEIN RECF"/>
    <property type="match status" value="1"/>
</dbReference>
<dbReference type="PANTHER" id="PTHR32182:SF0">
    <property type="entry name" value="DNA REPLICATION AND REPAIR PROTEIN RECF"/>
    <property type="match status" value="1"/>
</dbReference>
<dbReference type="Pfam" id="PF02463">
    <property type="entry name" value="SMC_N"/>
    <property type="match status" value="1"/>
</dbReference>
<dbReference type="SUPFAM" id="SSF52540">
    <property type="entry name" value="P-loop containing nucleoside triphosphate hydrolases"/>
    <property type="match status" value="1"/>
</dbReference>
<dbReference type="PROSITE" id="PS00617">
    <property type="entry name" value="RECF_1"/>
    <property type="match status" value="1"/>
</dbReference>
<dbReference type="PROSITE" id="PS00618">
    <property type="entry name" value="RECF_2"/>
    <property type="match status" value="1"/>
</dbReference>
<reference key="1">
    <citation type="journal article" date="2006" name="Genome Res.">
        <title>Massive genome erosion and functional adaptations provide insights into the symbiotic lifestyle of Sodalis glossinidius in the tsetse host.</title>
        <authorList>
            <person name="Toh H."/>
            <person name="Weiss B.L."/>
            <person name="Perkin S.A.H."/>
            <person name="Yamashita A."/>
            <person name="Oshima K."/>
            <person name="Hattori M."/>
            <person name="Aksoy S."/>
        </authorList>
    </citation>
    <scope>NUCLEOTIDE SEQUENCE [LARGE SCALE GENOMIC DNA]</scope>
    <source>
        <strain>morsitans</strain>
    </source>
</reference>
<feature type="chain" id="PRO_0000236146" description="DNA replication and repair protein RecF">
    <location>
        <begin position="1"/>
        <end position="364"/>
    </location>
</feature>
<feature type="binding site" evidence="1">
    <location>
        <begin position="30"/>
        <end position="37"/>
    </location>
    <ligand>
        <name>ATP</name>
        <dbReference type="ChEBI" id="CHEBI:30616"/>
    </ligand>
</feature>
<organism>
    <name type="scientific">Sodalis glossinidius (strain morsitans)</name>
    <dbReference type="NCBI Taxonomy" id="343509"/>
    <lineage>
        <taxon>Bacteria</taxon>
        <taxon>Pseudomonadati</taxon>
        <taxon>Pseudomonadota</taxon>
        <taxon>Gammaproteobacteria</taxon>
        <taxon>Enterobacterales</taxon>
        <taxon>Bruguierivoracaceae</taxon>
        <taxon>Sodalis</taxon>
    </lineage>
</organism>
<gene>
    <name evidence="1" type="primary">recF</name>
    <name type="ordered locus">SG0003</name>
</gene>
<comment type="function">
    <text evidence="1">The RecF protein is involved in DNA metabolism; it is required for DNA replication and normal SOS inducibility. RecF binds preferentially to single-stranded, linear DNA. It also seems to bind ATP.</text>
</comment>
<comment type="subcellular location">
    <subcellularLocation>
        <location evidence="1">Cytoplasm</location>
    </subcellularLocation>
</comment>
<comment type="similarity">
    <text evidence="1">Belongs to the RecF family.</text>
</comment>
<protein>
    <recommendedName>
        <fullName evidence="1">DNA replication and repair protein RecF</fullName>
    </recommendedName>
</protein>
<accession>Q2NX47</accession>
<keyword id="KW-0067">ATP-binding</keyword>
<keyword id="KW-0963">Cytoplasm</keyword>
<keyword id="KW-0227">DNA damage</keyword>
<keyword id="KW-0234">DNA repair</keyword>
<keyword id="KW-0235">DNA replication</keyword>
<keyword id="KW-0238">DNA-binding</keyword>
<keyword id="KW-0547">Nucleotide-binding</keyword>
<keyword id="KW-0742">SOS response</keyword>
<name>RECF_SODGM</name>
<evidence type="ECO:0000255" key="1">
    <source>
        <dbReference type="HAMAP-Rule" id="MF_00365"/>
    </source>
</evidence>
<proteinExistence type="inferred from homology"/>